<dbReference type="EMBL" id="CP000479">
    <property type="protein sequence ID" value="ABK68381.1"/>
    <property type="molecule type" value="Genomic_DNA"/>
</dbReference>
<dbReference type="RefSeq" id="WP_011725903.1">
    <property type="nucleotide sequence ID" value="NC_008595.1"/>
</dbReference>
<dbReference type="SMR" id="A0QK47"/>
<dbReference type="KEGG" id="mav:MAV_4137"/>
<dbReference type="HOGENOM" id="CLU_007733_1_0_11"/>
<dbReference type="Proteomes" id="UP000001574">
    <property type="component" value="Chromosome"/>
</dbReference>
<dbReference type="GO" id="GO:0005576">
    <property type="term" value="C:extracellular region"/>
    <property type="evidence" value="ECO:0007669"/>
    <property type="project" value="TreeGrafter"/>
</dbReference>
<dbReference type="GO" id="GO:0005886">
    <property type="term" value="C:plasma membrane"/>
    <property type="evidence" value="ECO:0007669"/>
    <property type="project" value="UniProtKB-SubCell"/>
</dbReference>
<dbReference type="HAMAP" id="MF_01600">
    <property type="entry name" value="UPF0182"/>
    <property type="match status" value="1"/>
</dbReference>
<dbReference type="InterPro" id="IPR005372">
    <property type="entry name" value="UPF0182"/>
</dbReference>
<dbReference type="NCBIfam" id="NF000825">
    <property type="entry name" value="PRK00068.1"/>
    <property type="match status" value="1"/>
</dbReference>
<dbReference type="NCBIfam" id="NF009097">
    <property type="entry name" value="PRK12438.1"/>
    <property type="match status" value="1"/>
</dbReference>
<dbReference type="PANTHER" id="PTHR39344">
    <property type="entry name" value="UPF0182 PROTEIN SLL1060"/>
    <property type="match status" value="1"/>
</dbReference>
<dbReference type="PANTHER" id="PTHR39344:SF1">
    <property type="entry name" value="UPF0182 PROTEIN SLL1060"/>
    <property type="match status" value="1"/>
</dbReference>
<dbReference type="Pfam" id="PF03699">
    <property type="entry name" value="UPF0182"/>
    <property type="match status" value="1"/>
</dbReference>
<gene>
    <name type="ordered locus">MAV_4137</name>
</gene>
<name>Y4137_MYCA1</name>
<evidence type="ECO:0000255" key="1">
    <source>
        <dbReference type="HAMAP-Rule" id="MF_01600"/>
    </source>
</evidence>
<evidence type="ECO:0000256" key="2">
    <source>
        <dbReference type="SAM" id="MobiDB-lite"/>
    </source>
</evidence>
<reference key="1">
    <citation type="submission" date="2006-10" db="EMBL/GenBank/DDBJ databases">
        <authorList>
            <person name="Fleischmann R.D."/>
            <person name="Dodson R.J."/>
            <person name="Haft D.H."/>
            <person name="Merkel J.S."/>
            <person name="Nelson W.C."/>
            <person name="Fraser C.M."/>
        </authorList>
    </citation>
    <scope>NUCLEOTIDE SEQUENCE [LARGE SCALE GENOMIC DNA]</scope>
    <source>
        <strain>104</strain>
    </source>
</reference>
<sequence>MGMRPTARMPKLTRRSRILILIALGVIALLLAGPRLIDAYVDWLWFGELGYRSVFSTVLVTRFVVFLIAGLLVGGIVFAGLAVAYRTRPVFVPSNDNDPVARYRALVLSRLRLVSIGVPVAIGLLAGIIAQSYWVRIQLFLHGGDFGIKDPQFGKDLGFYAFELPFYRLLLSYLFVAVFLAFVANLLAHYIFGGIRLSGRTGALSRSARIQLVTLVGLLVLLKAVAYWLDRYELLSHTRGGKPFTGAGYTDINAVLPAKLILMAIALICAAAVFSAITMRDLRIPAIGLVLLLLSSLIVGAGWPLIVEQISVKPNAAQKESEYISRSITATRQAYGLTSDVVTYRNYTGDAQATAQQVADDRATTSNIRLLDPTIVSPAFTQFQQGKNFYYFPDQLSIDRYLDRNGALRDYVVAARELNPDRLIDNQRDWINRHTVYTHGNGFIASPANTVRGIANDPNQNGGYPEFLVNVVGANGNVVSDGPAPLDQPRVYFGPVISNTSADYAIVGRNGADREYDYETSTETKNYTYTGLGGVPIGDWLSRSVFAAKFAERNFLFSNVIGSNSKILFNRDPARRVEAVAPWLTTDSSVYPAIVNKRLVWIIDGYTTLDNYPYSELTSLESATADSNEVAFNKLAPDKRVSYIRNSVKATVDAYDGTVTLYQQDEQDPVLKAWMQVFPGTVKPKSDISPELAEHLRYPEDLFKVQRMLLAKYHVNDPVTFFSTSDFWDVPLDPNPTASSYQPPYYIVAKNIAKNDNSSSYQLTSAMNRFKRDYLAAYISASSDPATYGRITVLTIPGQVNGPKLANNAITTDPAVSQDLGVIGRDNQNRIRWGNLLTLPVGQGGLLYVEPVYASPGASDAASSYPRLIRVAMMYNDKIGYGPTVRDALTGLFGPGAGAAATNIQPTEGGAPAASPPANAPAPAVTPGSAPPVAAPPVPDGSVTLSPAKAAVLQEIQAAIGAAKDAQKKGDFAGYGAALQRLDDAITKYNNTK</sequence>
<feature type="chain" id="PRO_0000291281" description="UPF0182 protein MAV_4137">
    <location>
        <begin position="1"/>
        <end position="993"/>
    </location>
</feature>
<feature type="transmembrane region" description="Helical" evidence="1">
    <location>
        <begin position="18"/>
        <end position="38"/>
    </location>
</feature>
<feature type="transmembrane region" description="Helical" evidence="1">
    <location>
        <begin position="63"/>
        <end position="83"/>
    </location>
</feature>
<feature type="transmembrane region" description="Helical" evidence="1">
    <location>
        <begin position="113"/>
        <end position="133"/>
    </location>
</feature>
<feature type="transmembrane region" description="Helical" evidence="1">
    <location>
        <begin position="175"/>
        <end position="195"/>
    </location>
</feature>
<feature type="transmembrane region" description="Helical" evidence="1">
    <location>
        <begin position="210"/>
        <end position="230"/>
    </location>
</feature>
<feature type="transmembrane region" description="Helical" evidence="1">
    <location>
        <begin position="254"/>
        <end position="274"/>
    </location>
</feature>
<feature type="transmembrane region" description="Helical" evidence="1">
    <location>
        <begin position="287"/>
        <end position="307"/>
    </location>
</feature>
<feature type="region of interest" description="Disordered" evidence="2">
    <location>
        <begin position="903"/>
        <end position="941"/>
    </location>
</feature>
<feature type="compositionally biased region" description="Pro residues" evidence="2">
    <location>
        <begin position="929"/>
        <end position="939"/>
    </location>
</feature>
<accession>A0QK47</accession>
<comment type="subcellular location">
    <subcellularLocation>
        <location evidence="1">Cell membrane</location>
        <topology evidence="1">Multi-pass membrane protein</topology>
    </subcellularLocation>
</comment>
<comment type="similarity">
    <text evidence="1">Belongs to the UPF0182 family.</text>
</comment>
<organism>
    <name type="scientific">Mycobacterium avium (strain 104)</name>
    <dbReference type="NCBI Taxonomy" id="243243"/>
    <lineage>
        <taxon>Bacteria</taxon>
        <taxon>Bacillati</taxon>
        <taxon>Actinomycetota</taxon>
        <taxon>Actinomycetes</taxon>
        <taxon>Mycobacteriales</taxon>
        <taxon>Mycobacteriaceae</taxon>
        <taxon>Mycobacterium</taxon>
        <taxon>Mycobacterium avium complex (MAC)</taxon>
    </lineage>
</organism>
<protein>
    <recommendedName>
        <fullName evidence="1">UPF0182 protein MAV_4137</fullName>
    </recommendedName>
</protein>
<proteinExistence type="inferred from homology"/>
<keyword id="KW-1003">Cell membrane</keyword>
<keyword id="KW-0472">Membrane</keyword>
<keyword id="KW-0812">Transmembrane</keyword>
<keyword id="KW-1133">Transmembrane helix</keyword>